<proteinExistence type="inferred from homology"/>
<keyword id="KW-0963">Cytoplasm</keyword>
<keyword id="KW-0275">Fatty acid biosynthesis</keyword>
<keyword id="KW-0276">Fatty acid metabolism</keyword>
<keyword id="KW-0444">Lipid biosynthesis</keyword>
<keyword id="KW-0443">Lipid metabolism</keyword>
<keyword id="KW-0596">Phosphopantetheine</keyword>
<keyword id="KW-0597">Phosphoprotein</keyword>
<accession>A3NXM6</accession>
<evidence type="ECO:0000255" key="1">
    <source>
        <dbReference type="HAMAP-Rule" id="MF_01217"/>
    </source>
</evidence>
<evidence type="ECO:0000255" key="2">
    <source>
        <dbReference type="PROSITE-ProRule" id="PRU00258"/>
    </source>
</evidence>
<feature type="chain" id="PRO_1000066574" description="Acyl carrier protein">
    <location>
        <begin position="1"/>
        <end position="79"/>
    </location>
</feature>
<feature type="domain" description="Carrier" evidence="2">
    <location>
        <begin position="2"/>
        <end position="77"/>
    </location>
</feature>
<feature type="modified residue" description="O-(pantetheine 4'-phosphoryl)serine" evidence="2">
    <location>
        <position position="37"/>
    </location>
</feature>
<organism>
    <name type="scientific">Burkholderia pseudomallei (strain 1106a)</name>
    <dbReference type="NCBI Taxonomy" id="357348"/>
    <lineage>
        <taxon>Bacteria</taxon>
        <taxon>Pseudomonadati</taxon>
        <taxon>Pseudomonadota</taxon>
        <taxon>Betaproteobacteria</taxon>
        <taxon>Burkholderiales</taxon>
        <taxon>Burkholderiaceae</taxon>
        <taxon>Burkholderia</taxon>
        <taxon>pseudomallei group</taxon>
    </lineage>
</organism>
<comment type="function">
    <text evidence="1">Carrier of the growing fatty acid chain in fatty acid biosynthesis.</text>
</comment>
<comment type="pathway">
    <text evidence="1">Lipid metabolism; fatty acid biosynthesis.</text>
</comment>
<comment type="subcellular location">
    <subcellularLocation>
        <location evidence="1">Cytoplasm</location>
    </subcellularLocation>
</comment>
<comment type="PTM">
    <text evidence="1">4'-phosphopantetheine is transferred from CoA to a specific serine of apo-ACP by AcpS. This modification is essential for activity because fatty acids are bound in thioester linkage to the sulfhydryl of the prosthetic group.</text>
</comment>
<comment type="similarity">
    <text evidence="1">Belongs to the acyl carrier protein (ACP) family.</text>
</comment>
<gene>
    <name evidence="1" type="primary">acpP</name>
    <name type="ordered locus">BURPS1106A_2850</name>
</gene>
<dbReference type="EMBL" id="CP000572">
    <property type="protein sequence ID" value="ABN90174.1"/>
    <property type="molecule type" value="Genomic_DNA"/>
</dbReference>
<dbReference type="RefSeq" id="WP_004197638.1">
    <property type="nucleotide sequence ID" value="NC_009076.1"/>
</dbReference>
<dbReference type="SMR" id="A3NXM6"/>
<dbReference type="GeneID" id="98102461"/>
<dbReference type="KEGG" id="bpl:BURPS1106A_2850"/>
<dbReference type="HOGENOM" id="CLU_108696_5_1_4"/>
<dbReference type="UniPathway" id="UPA00094"/>
<dbReference type="Proteomes" id="UP000006738">
    <property type="component" value="Chromosome I"/>
</dbReference>
<dbReference type="GO" id="GO:0005829">
    <property type="term" value="C:cytosol"/>
    <property type="evidence" value="ECO:0007669"/>
    <property type="project" value="TreeGrafter"/>
</dbReference>
<dbReference type="GO" id="GO:0016020">
    <property type="term" value="C:membrane"/>
    <property type="evidence" value="ECO:0007669"/>
    <property type="project" value="GOC"/>
</dbReference>
<dbReference type="GO" id="GO:0000035">
    <property type="term" value="F:acyl binding"/>
    <property type="evidence" value="ECO:0007669"/>
    <property type="project" value="TreeGrafter"/>
</dbReference>
<dbReference type="GO" id="GO:0000036">
    <property type="term" value="F:acyl carrier activity"/>
    <property type="evidence" value="ECO:0007669"/>
    <property type="project" value="UniProtKB-UniRule"/>
</dbReference>
<dbReference type="GO" id="GO:0009245">
    <property type="term" value="P:lipid A biosynthetic process"/>
    <property type="evidence" value="ECO:0007669"/>
    <property type="project" value="TreeGrafter"/>
</dbReference>
<dbReference type="FunFam" id="1.10.1200.10:FF:000001">
    <property type="entry name" value="Acyl carrier protein"/>
    <property type="match status" value="1"/>
</dbReference>
<dbReference type="Gene3D" id="1.10.1200.10">
    <property type="entry name" value="ACP-like"/>
    <property type="match status" value="1"/>
</dbReference>
<dbReference type="HAMAP" id="MF_01217">
    <property type="entry name" value="Acyl_carrier"/>
    <property type="match status" value="1"/>
</dbReference>
<dbReference type="InterPro" id="IPR003231">
    <property type="entry name" value="ACP"/>
</dbReference>
<dbReference type="InterPro" id="IPR036736">
    <property type="entry name" value="ACP-like_sf"/>
</dbReference>
<dbReference type="InterPro" id="IPR009081">
    <property type="entry name" value="PP-bd_ACP"/>
</dbReference>
<dbReference type="InterPro" id="IPR006162">
    <property type="entry name" value="Ppantetheine_attach_site"/>
</dbReference>
<dbReference type="NCBIfam" id="TIGR00517">
    <property type="entry name" value="acyl_carrier"/>
    <property type="match status" value="1"/>
</dbReference>
<dbReference type="NCBIfam" id="NF002148">
    <property type="entry name" value="PRK00982.1-2"/>
    <property type="match status" value="1"/>
</dbReference>
<dbReference type="NCBIfam" id="NF002149">
    <property type="entry name" value="PRK00982.1-3"/>
    <property type="match status" value="1"/>
</dbReference>
<dbReference type="NCBIfam" id="NF002150">
    <property type="entry name" value="PRK00982.1-4"/>
    <property type="match status" value="1"/>
</dbReference>
<dbReference type="NCBIfam" id="NF002151">
    <property type="entry name" value="PRK00982.1-5"/>
    <property type="match status" value="1"/>
</dbReference>
<dbReference type="PANTHER" id="PTHR20863">
    <property type="entry name" value="ACYL CARRIER PROTEIN"/>
    <property type="match status" value="1"/>
</dbReference>
<dbReference type="PANTHER" id="PTHR20863:SF76">
    <property type="entry name" value="CARRIER DOMAIN-CONTAINING PROTEIN"/>
    <property type="match status" value="1"/>
</dbReference>
<dbReference type="Pfam" id="PF00550">
    <property type="entry name" value="PP-binding"/>
    <property type="match status" value="1"/>
</dbReference>
<dbReference type="SUPFAM" id="SSF47336">
    <property type="entry name" value="ACP-like"/>
    <property type="match status" value="1"/>
</dbReference>
<dbReference type="PROSITE" id="PS50075">
    <property type="entry name" value="CARRIER"/>
    <property type="match status" value="1"/>
</dbReference>
<dbReference type="PROSITE" id="PS00012">
    <property type="entry name" value="PHOSPHOPANTETHEINE"/>
    <property type="match status" value="1"/>
</dbReference>
<protein>
    <recommendedName>
        <fullName evidence="1">Acyl carrier protein</fullName>
        <shortName evidence="1">ACP</shortName>
    </recommendedName>
</protein>
<reference key="1">
    <citation type="journal article" date="2010" name="Genome Biol. Evol.">
        <title>Continuing evolution of Burkholderia mallei through genome reduction and large-scale rearrangements.</title>
        <authorList>
            <person name="Losada L."/>
            <person name="Ronning C.M."/>
            <person name="DeShazer D."/>
            <person name="Woods D."/>
            <person name="Fedorova N."/>
            <person name="Kim H.S."/>
            <person name="Shabalina S.A."/>
            <person name="Pearson T.R."/>
            <person name="Brinkac L."/>
            <person name="Tan P."/>
            <person name="Nandi T."/>
            <person name="Crabtree J."/>
            <person name="Badger J."/>
            <person name="Beckstrom-Sternberg S."/>
            <person name="Saqib M."/>
            <person name="Schutzer S.E."/>
            <person name="Keim P."/>
            <person name="Nierman W.C."/>
        </authorList>
    </citation>
    <scope>NUCLEOTIDE SEQUENCE [LARGE SCALE GENOMIC DNA]</scope>
    <source>
        <strain>1106a</strain>
    </source>
</reference>
<name>ACP_BURP0</name>
<sequence length="79" mass="8712">MDNIEQRVKKIVAEQLGVAEAEIKNEASFVNDLGADSLDTVELVMALEDEFGMEIPDEEAEKITTVQQAIDYARANVKA</sequence>